<accession>O84807</accession>
<proteinExistence type="inferred from homology"/>
<reference key="1">
    <citation type="journal article" date="1998" name="Science">
        <title>Genome sequence of an obligate intracellular pathogen of humans: Chlamydia trachomatis.</title>
        <authorList>
            <person name="Stephens R.S."/>
            <person name="Kalman S."/>
            <person name="Lammel C.J."/>
            <person name="Fan J."/>
            <person name="Marathe R."/>
            <person name="Aravind L."/>
            <person name="Mitchell W.P."/>
            <person name="Olinger L."/>
            <person name="Tatusov R.L."/>
            <person name="Zhao Q."/>
            <person name="Koonin E.V."/>
            <person name="Davis R.W."/>
        </authorList>
    </citation>
    <scope>NUCLEOTIDE SEQUENCE [LARGE SCALE GENOMIC DNA]</scope>
    <source>
        <strain>ATCC VR-885 / DSM 19411 / UW-3/Cx</strain>
    </source>
</reference>
<dbReference type="EMBL" id="AE001273">
    <property type="protein sequence ID" value="AAC68396.1"/>
    <property type="molecule type" value="Genomic_DNA"/>
</dbReference>
<dbReference type="PIR" id="G71469">
    <property type="entry name" value="G71469"/>
</dbReference>
<dbReference type="RefSeq" id="NP_220321.1">
    <property type="nucleotide sequence ID" value="NC_000117.1"/>
</dbReference>
<dbReference type="RefSeq" id="WP_009872183.1">
    <property type="nucleotide sequence ID" value="NC_000117.1"/>
</dbReference>
<dbReference type="SMR" id="O84807"/>
<dbReference type="FunCoup" id="O84807">
    <property type="interactions" value="208"/>
</dbReference>
<dbReference type="STRING" id="272561.CT_801"/>
<dbReference type="EnsemblBacteria" id="AAC68396">
    <property type="protein sequence ID" value="AAC68396"/>
    <property type="gene ID" value="CT_801"/>
</dbReference>
<dbReference type="GeneID" id="884601"/>
<dbReference type="KEGG" id="ctr:CT_801"/>
<dbReference type="PATRIC" id="fig|272561.5.peg.882"/>
<dbReference type="HOGENOM" id="CLU_113441_5_2_0"/>
<dbReference type="InParanoid" id="O84807"/>
<dbReference type="OrthoDB" id="9812702at2"/>
<dbReference type="Proteomes" id="UP000000431">
    <property type="component" value="Chromosome"/>
</dbReference>
<dbReference type="GO" id="GO:0005737">
    <property type="term" value="C:cytoplasm"/>
    <property type="evidence" value="ECO:0007669"/>
    <property type="project" value="UniProtKB-ARBA"/>
</dbReference>
<dbReference type="GO" id="GO:1990904">
    <property type="term" value="C:ribonucleoprotein complex"/>
    <property type="evidence" value="ECO:0007669"/>
    <property type="project" value="UniProtKB-KW"/>
</dbReference>
<dbReference type="GO" id="GO:0005840">
    <property type="term" value="C:ribosome"/>
    <property type="evidence" value="ECO:0007669"/>
    <property type="project" value="UniProtKB-KW"/>
</dbReference>
<dbReference type="GO" id="GO:0070181">
    <property type="term" value="F:small ribosomal subunit rRNA binding"/>
    <property type="evidence" value="ECO:0000318"/>
    <property type="project" value="GO_Central"/>
</dbReference>
<dbReference type="GO" id="GO:0003735">
    <property type="term" value="F:structural constituent of ribosome"/>
    <property type="evidence" value="ECO:0000318"/>
    <property type="project" value="GO_Central"/>
</dbReference>
<dbReference type="GO" id="GO:0006412">
    <property type="term" value="P:translation"/>
    <property type="evidence" value="ECO:0007669"/>
    <property type="project" value="UniProtKB-UniRule"/>
</dbReference>
<dbReference type="CDD" id="cd00473">
    <property type="entry name" value="bS6"/>
    <property type="match status" value="1"/>
</dbReference>
<dbReference type="Gene3D" id="3.30.70.60">
    <property type="match status" value="1"/>
</dbReference>
<dbReference type="HAMAP" id="MF_00360">
    <property type="entry name" value="Ribosomal_bS6"/>
    <property type="match status" value="1"/>
</dbReference>
<dbReference type="InterPro" id="IPR000529">
    <property type="entry name" value="Ribosomal_bS6"/>
</dbReference>
<dbReference type="InterPro" id="IPR035980">
    <property type="entry name" value="Ribosomal_bS6_sf"/>
</dbReference>
<dbReference type="InterPro" id="IPR020814">
    <property type="entry name" value="Ribosomal_S6_plastid/chlpt"/>
</dbReference>
<dbReference type="InterPro" id="IPR014717">
    <property type="entry name" value="Transl_elong_EF1B/ribsomal_bS6"/>
</dbReference>
<dbReference type="NCBIfam" id="TIGR00166">
    <property type="entry name" value="S6"/>
    <property type="match status" value="1"/>
</dbReference>
<dbReference type="PANTHER" id="PTHR21011">
    <property type="entry name" value="MITOCHONDRIAL 28S RIBOSOMAL PROTEIN S6"/>
    <property type="match status" value="1"/>
</dbReference>
<dbReference type="PANTHER" id="PTHR21011:SF1">
    <property type="entry name" value="SMALL RIBOSOMAL SUBUNIT PROTEIN BS6M"/>
    <property type="match status" value="1"/>
</dbReference>
<dbReference type="Pfam" id="PF01250">
    <property type="entry name" value="Ribosomal_S6"/>
    <property type="match status" value="1"/>
</dbReference>
<dbReference type="SUPFAM" id="SSF54995">
    <property type="entry name" value="Ribosomal protein S6"/>
    <property type="match status" value="1"/>
</dbReference>
<evidence type="ECO:0000250" key="1"/>
<evidence type="ECO:0000305" key="2"/>
<feature type="chain" id="PRO_0000176753" description="Small ribosomal subunit protein bS6">
    <location>
        <begin position="1"/>
        <end position="112"/>
    </location>
</feature>
<gene>
    <name type="primary">rpsF</name>
    <name type="synonym">rs6</name>
    <name type="ordered locus">CT_801</name>
</gene>
<keyword id="KW-1185">Reference proteome</keyword>
<keyword id="KW-0687">Ribonucleoprotein</keyword>
<keyword id="KW-0689">Ribosomal protein</keyword>
<keyword id="KW-0694">RNA-binding</keyword>
<keyword id="KW-0699">rRNA-binding</keyword>
<name>RS6_CHLTR</name>
<organism>
    <name type="scientific">Chlamydia trachomatis serovar D (strain ATCC VR-885 / DSM 19411 / UW-3/Cx)</name>
    <dbReference type="NCBI Taxonomy" id="272561"/>
    <lineage>
        <taxon>Bacteria</taxon>
        <taxon>Pseudomonadati</taxon>
        <taxon>Chlamydiota</taxon>
        <taxon>Chlamydiia</taxon>
        <taxon>Chlamydiales</taxon>
        <taxon>Chlamydiaceae</taxon>
        <taxon>Chlamydia/Chlamydophila group</taxon>
        <taxon>Chlamydia</taxon>
    </lineage>
</organism>
<sequence>MKKKTGQLYEGAYVFSVTLSEDARRKALEKVTSGITNYGGEVLKIHDQGRKKLAYTIRGAREGYYYFIYFTVAPEAIAELWREYHLNEDLLRFMTLKASAVKEVLEFATLPE</sequence>
<comment type="function">
    <text evidence="1">Binds together with bS18 to 16S ribosomal RNA.</text>
</comment>
<comment type="similarity">
    <text evidence="2">Belongs to the bacterial ribosomal protein bS6 family.</text>
</comment>
<protein>
    <recommendedName>
        <fullName evidence="2">Small ribosomal subunit protein bS6</fullName>
    </recommendedName>
    <alternativeName>
        <fullName>30S ribosomal protein S6</fullName>
    </alternativeName>
</protein>